<sequence length="184" mass="20746">MAKLFFRYAAMNSGKSTQLLQIANNYESMDKKVALYTSAIDDRYGVGMITSRLNIQRESNTFDAGFDFLAHDYGDTACVLVDEAQFMTPEQAQQLHRLAHKRNIPVICFGLRTDFQGHPFPGSAWLLSLADDVEEIKTICHCGRKATMHIRIDGDGRRVKEGPQVEIGGEARYRAVCGRCFHHD</sequence>
<accession>Q7NVK0</accession>
<feature type="chain" id="PRO_0000242789" description="Thymidine kinase">
    <location>
        <begin position="1"/>
        <end position="184"/>
    </location>
</feature>
<feature type="active site" description="Proton acceptor" evidence="1">
    <location>
        <position position="83"/>
    </location>
</feature>
<feature type="binding site" evidence="1">
    <location>
        <begin position="9"/>
        <end position="16"/>
    </location>
    <ligand>
        <name>ATP</name>
        <dbReference type="ChEBI" id="CHEBI:30616"/>
    </ligand>
</feature>
<feature type="binding site" evidence="1">
    <location>
        <begin position="82"/>
        <end position="85"/>
    </location>
    <ligand>
        <name>ATP</name>
        <dbReference type="ChEBI" id="CHEBI:30616"/>
    </ligand>
</feature>
<feature type="binding site" evidence="1">
    <location>
        <position position="140"/>
    </location>
    <ligand>
        <name>Zn(2+)</name>
        <dbReference type="ChEBI" id="CHEBI:29105"/>
    </ligand>
</feature>
<feature type="binding site" evidence="1">
    <location>
        <position position="142"/>
    </location>
    <ligand>
        <name>Zn(2+)</name>
        <dbReference type="ChEBI" id="CHEBI:29105"/>
    </ligand>
</feature>
<feature type="binding site" evidence="1">
    <location>
        <position position="177"/>
    </location>
    <ligand>
        <name>Zn(2+)</name>
        <dbReference type="ChEBI" id="CHEBI:29105"/>
    </ligand>
</feature>
<feature type="binding site" evidence="1">
    <location>
        <position position="180"/>
    </location>
    <ligand>
        <name>Zn(2+)</name>
        <dbReference type="ChEBI" id="CHEBI:29105"/>
    </ligand>
</feature>
<proteinExistence type="inferred from homology"/>
<organism>
    <name type="scientific">Chromobacterium violaceum (strain ATCC 12472 / DSM 30191 / JCM 1249 / CCUG 213 / NBRC 12614 / NCIMB 9131 / NCTC 9757 / MK)</name>
    <dbReference type="NCBI Taxonomy" id="243365"/>
    <lineage>
        <taxon>Bacteria</taxon>
        <taxon>Pseudomonadati</taxon>
        <taxon>Pseudomonadota</taxon>
        <taxon>Betaproteobacteria</taxon>
        <taxon>Neisseriales</taxon>
        <taxon>Chromobacteriaceae</taxon>
        <taxon>Chromobacterium</taxon>
    </lineage>
</organism>
<dbReference type="EC" id="2.7.1.21" evidence="1"/>
<dbReference type="EMBL" id="AE016825">
    <property type="protein sequence ID" value="AAQ60014.1"/>
    <property type="molecule type" value="Genomic_DNA"/>
</dbReference>
<dbReference type="RefSeq" id="WP_011135889.1">
    <property type="nucleotide sequence ID" value="NC_005085.1"/>
</dbReference>
<dbReference type="SMR" id="Q7NVK0"/>
<dbReference type="STRING" id="243365.CV_2342"/>
<dbReference type="KEGG" id="cvi:CV_2342"/>
<dbReference type="eggNOG" id="COG1435">
    <property type="taxonomic scope" value="Bacteria"/>
</dbReference>
<dbReference type="HOGENOM" id="CLU_064400_2_1_4"/>
<dbReference type="OrthoDB" id="9781579at2"/>
<dbReference type="Proteomes" id="UP000001424">
    <property type="component" value="Chromosome"/>
</dbReference>
<dbReference type="GO" id="GO:0005829">
    <property type="term" value="C:cytosol"/>
    <property type="evidence" value="ECO:0007669"/>
    <property type="project" value="TreeGrafter"/>
</dbReference>
<dbReference type="GO" id="GO:0005524">
    <property type="term" value="F:ATP binding"/>
    <property type="evidence" value="ECO:0007669"/>
    <property type="project" value="UniProtKB-UniRule"/>
</dbReference>
<dbReference type="GO" id="GO:0004797">
    <property type="term" value="F:thymidine kinase activity"/>
    <property type="evidence" value="ECO:0007669"/>
    <property type="project" value="UniProtKB-UniRule"/>
</dbReference>
<dbReference type="GO" id="GO:0008270">
    <property type="term" value="F:zinc ion binding"/>
    <property type="evidence" value="ECO:0007669"/>
    <property type="project" value="UniProtKB-UniRule"/>
</dbReference>
<dbReference type="GO" id="GO:0071897">
    <property type="term" value="P:DNA biosynthetic process"/>
    <property type="evidence" value="ECO:0007669"/>
    <property type="project" value="UniProtKB-KW"/>
</dbReference>
<dbReference type="GO" id="GO:0046104">
    <property type="term" value="P:thymidine metabolic process"/>
    <property type="evidence" value="ECO:0007669"/>
    <property type="project" value="TreeGrafter"/>
</dbReference>
<dbReference type="Gene3D" id="3.30.60.20">
    <property type="match status" value="1"/>
</dbReference>
<dbReference type="Gene3D" id="3.40.50.300">
    <property type="entry name" value="P-loop containing nucleotide triphosphate hydrolases"/>
    <property type="match status" value="1"/>
</dbReference>
<dbReference type="HAMAP" id="MF_00124">
    <property type="entry name" value="Thymidine_kinase"/>
    <property type="match status" value="1"/>
</dbReference>
<dbReference type="InterPro" id="IPR027417">
    <property type="entry name" value="P-loop_NTPase"/>
</dbReference>
<dbReference type="InterPro" id="IPR001267">
    <property type="entry name" value="Thymidine_kinase"/>
</dbReference>
<dbReference type="NCBIfam" id="NF003300">
    <property type="entry name" value="PRK04296.1-5"/>
    <property type="match status" value="1"/>
</dbReference>
<dbReference type="PANTHER" id="PTHR11441">
    <property type="entry name" value="THYMIDINE KINASE"/>
    <property type="match status" value="1"/>
</dbReference>
<dbReference type="PANTHER" id="PTHR11441:SF0">
    <property type="entry name" value="THYMIDINE KINASE, CYTOSOLIC"/>
    <property type="match status" value="1"/>
</dbReference>
<dbReference type="Pfam" id="PF00265">
    <property type="entry name" value="TK"/>
    <property type="match status" value="1"/>
</dbReference>
<dbReference type="PIRSF" id="PIRSF035805">
    <property type="entry name" value="TK_cell"/>
    <property type="match status" value="1"/>
</dbReference>
<dbReference type="SUPFAM" id="SSF57716">
    <property type="entry name" value="Glucocorticoid receptor-like (DNA-binding domain)"/>
    <property type="match status" value="1"/>
</dbReference>
<dbReference type="SUPFAM" id="SSF52540">
    <property type="entry name" value="P-loop containing nucleoside triphosphate hydrolases"/>
    <property type="match status" value="1"/>
</dbReference>
<gene>
    <name evidence="1" type="primary">tdk</name>
    <name type="ordered locus">CV_2342</name>
</gene>
<protein>
    <recommendedName>
        <fullName evidence="1">Thymidine kinase</fullName>
        <ecNumber evidence="1">2.7.1.21</ecNumber>
    </recommendedName>
</protein>
<reference key="1">
    <citation type="journal article" date="2003" name="Proc. Natl. Acad. Sci. U.S.A.">
        <title>The complete genome sequence of Chromobacterium violaceum reveals remarkable and exploitable bacterial adaptability.</title>
        <authorList>
            <person name="Vasconcelos A.T.R."/>
            <person name="de Almeida D.F."/>
            <person name="Hungria M."/>
            <person name="Guimaraes C.T."/>
            <person name="Antonio R.V."/>
            <person name="Almeida F.C."/>
            <person name="de Almeida L.G.P."/>
            <person name="de Almeida R."/>
            <person name="Alves-Gomes J.A."/>
            <person name="Andrade E.M."/>
            <person name="Araripe J."/>
            <person name="de Araujo M.F.F."/>
            <person name="Astolfi-Filho S."/>
            <person name="Azevedo V."/>
            <person name="Baptista A.J."/>
            <person name="Bataus L.A.M."/>
            <person name="Batista J.S."/>
            <person name="Belo A."/>
            <person name="van den Berg C."/>
            <person name="Bogo M."/>
            <person name="Bonatto S."/>
            <person name="Bordignon J."/>
            <person name="Brigido M.M."/>
            <person name="Brito C.A."/>
            <person name="Brocchi M."/>
            <person name="Burity H.A."/>
            <person name="Camargo A.A."/>
            <person name="Cardoso D.D.P."/>
            <person name="Carneiro N.P."/>
            <person name="Carraro D.M."/>
            <person name="Carvalho C.M.B."/>
            <person name="Cascardo J.C.M."/>
            <person name="Cavada B.S."/>
            <person name="Chueire L.M.O."/>
            <person name="Creczynski-Pasa T.B."/>
            <person name="Cunha-Junior N.C."/>
            <person name="Fagundes N."/>
            <person name="Falcao C.L."/>
            <person name="Fantinatti F."/>
            <person name="Farias I.P."/>
            <person name="Felipe M.S.S."/>
            <person name="Ferrari L.P."/>
            <person name="Ferro J.A."/>
            <person name="Ferro M.I.T."/>
            <person name="Franco G.R."/>
            <person name="Freitas N.S.A."/>
            <person name="Furlan L.R."/>
            <person name="Gazzinelli R.T."/>
            <person name="Gomes E.A."/>
            <person name="Goncalves P.R."/>
            <person name="Grangeiro T.B."/>
            <person name="Grattapaglia D."/>
            <person name="Grisard E.C."/>
            <person name="Hanna E.S."/>
            <person name="Jardim S.N."/>
            <person name="Laurino J."/>
            <person name="Leoi L.C.T."/>
            <person name="Lima L.F.A."/>
            <person name="Loureiro M.F."/>
            <person name="Lyra M.C.C.P."/>
            <person name="Madeira H.M.F."/>
            <person name="Manfio G.P."/>
            <person name="Maranhao A.Q."/>
            <person name="Martins W.S."/>
            <person name="di Mauro S.M.Z."/>
            <person name="de Medeiros S.R.B."/>
            <person name="Meissner R.V."/>
            <person name="Moreira M.A.M."/>
            <person name="Nascimento F.F."/>
            <person name="Nicolas M.F."/>
            <person name="Oliveira J.G."/>
            <person name="Oliveira S.C."/>
            <person name="Paixao R.F.C."/>
            <person name="Parente J.A."/>
            <person name="Pedrosa F.O."/>
            <person name="Pena S.D.J."/>
            <person name="Pereira J.O."/>
            <person name="Pereira M."/>
            <person name="Pinto L.S.R.C."/>
            <person name="Pinto L.S."/>
            <person name="Porto J.I.R."/>
            <person name="Potrich D.P."/>
            <person name="Ramalho-Neto C.E."/>
            <person name="Reis A.M.M."/>
            <person name="Rigo L.U."/>
            <person name="Rondinelli E."/>
            <person name="Santos E.B.P."/>
            <person name="Santos F.R."/>
            <person name="Schneider M.P.C."/>
            <person name="Seuanez H.N."/>
            <person name="Silva A.M.R."/>
            <person name="da Silva A.L.C."/>
            <person name="Silva D.W."/>
            <person name="Silva R."/>
            <person name="Simoes I.C."/>
            <person name="Simon D."/>
            <person name="Soares C.M.A."/>
            <person name="Soares R.B.A."/>
            <person name="Souza E.M."/>
            <person name="Souza K.R.L."/>
            <person name="Souza R.C."/>
            <person name="Steffens M.B.R."/>
            <person name="Steindel M."/>
            <person name="Teixeira S.R."/>
            <person name="Urmenyi T."/>
            <person name="Vettore A."/>
            <person name="Wassem R."/>
            <person name="Zaha A."/>
            <person name="Simpson A.J.G."/>
        </authorList>
    </citation>
    <scope>NUCLEOTIDE SEQUENCE [LARGE SCALE GENOMIC DNA]</scope>
    <source>
        <strain>ATCC 12472 / DSM 30191 / JCM 1249 / CCUG 213 / NBRC 12614 / NCIMB 9131 / NCTC 9757 / MK</strain>
    </source>
</reference>
<evidence type="ECO:0000255" key="1">
    <source>
        <dbReference type="HAMAP-Rule" id="MF_00124"/>
    </source>
</evidence>
<comment type="catalytic activity">
    <reaction evidence="1">
        <text>thymidine + ATP = dTMP + ADP + H(+)</text>
        <dbReference type="Rhea" id="RHEA:19129"/>
        <dbReference type="ChEBI" id="CHEBI:15378"/>
        <dbReference type="ChEBI" id="CHEBI:17748"/>
        <dbReference type="ChEBI" id="CHEBI:30616"/>
        <dbReference type="ChEBI" id="CHEBI:63528"/>
        <dbReference type="ChEBI" id="CHEBI:456216"/>
        <dbReference type="EC" id="2.7.1.21"/>
    </reaction>
</comment>
<comment type="subunit">
    <text evidence="1">Homotetramer.</text>
</comment>
<comment type="subcellular location">
    <subcellularLocation>
        <location evidence="1">Cytoplasm</location>
    </subcellularLocation>
</comment>
<comment type="similarity">
    <text evidence="1">Belongs to the thymidine kinase family.</text>
</comment>
<keyword id="KW-0067">ATP-binding</keyword>
<keyword id="KW-0963">Cytoplasm</keyword>
<keyword id="KW-0237">DNA synthesis</keyword>
<keyword id="KW-0418">Kinase</keyword>
<keyword id="KW-0479">Metal-binding</keyword>
<keyword id="KW-0547">Nucleotide-binding</keyword>
<keyword id="KW-1185">Reference proteome</keyword>
<keyword id="KW-0808">Transferase</keyword>
<keyword id="KW-0862">Zinc</keyword>
<name>KITH_CHRVO</name>